<protein>
    <recommendedName>
        <fullName evidence="1">3-dehydroquinate synthase</fullName>
        <shortName evidence="1">DHQS</shortName>
        <ecNumber evidence="1">4.2.3.4</ecNumber>
    </recommendedName>
</protein>
<evidence type="ECO:0000255" key="1">
    <source>
        <dbReference type="HAMAP-Rule" id="MF_00110"/>
    </source>
</evidence>
<sequence length="361" mass="39508">MQTLTVELGDRSYPIHIGRGLLDDPTRFAPRIRGKRVMIVTNETVAPLYLDRLKRTLGDFRVEAVILPDGEEYKTMETLNQVYTALLEARFDRKATLVALGGGVIGDITGFAAASYQRGVDFIQVPTTLLSQVDSSVGGKTGVNHPLGKNMIGAFHQPRCVVIDTDTLDTLPDRELRAGIAEVIKYGLICDRPFFDWLEANMDRLLARDPEALAYAIHRSCHDKAQVVAEDEREGGRRAILNLGHTFGHAIETGMGYGVWLHGEGVATGMVMAARMSRRLGWLDAEDLHRTEALIARAGLPVEPPPEITAERFAELMSVDKKVLDGQLRLVLLRGIGEAVVTADFDPAALDATLNQVGSGN</sequence>
<gene>
    <name evidence="1" type="primary">aroB</name>
    <name type="ordered locus">Tgr7_3030</name>
</gene>
<accession>B8GPV3</accession>
<reference key="1">
    <citation type="journal article" date="2011" name="Stand. Genomic Sci.">
        <title>Complete genome sequence of 'Thioalkalivibrio sulfidophilus' HL-EbGr7.</title>
        <authorList>
            <person name="Muyzer G."/>
            <person name="Sorokin D.Y."/>
            <person name="Mavromatis K."/>
            <person name="Lapidus A."/>
            <person name="Clum A."/>
            <person name="Ivanova N."/>
            <person name="Pati A."/>
            <person name="d'Haeseleer P."/>
            <person name="Woyke T."/>
            <person name="Kyrpides N.C."/>
        </authorList>
    </citation>
    <scope>NUCLEOTIDE SEQUENCE [LARGE SCALE GENOMIC DNA]</scope>
    <source>
        <strain>HL-EbGR7</strain>
    </source>
</reference>
<proteinExistence type="inferred from homology"/>
<comment type="function">
    <text evidence="1">Catalyzes the conversion of 3-deoxy-D-arabino-heptulosonate 7-phosphate (DAHP) to dehydroquinate (DHQ).</text>
</comment>
<comment type="catalytic activity">
    <reaction evidence="1">
        <text>7-phospho-2-dehydro-3-deoxy-D-arabino-heptonate = 3-dehydroquinate + phosphate</text>
        <dbReference type="Rhea" id="RHEA:21968"/>
        <dbReference type="ChEBI" id="CHEBI:32364"/>
        <dbReference type="ChEBI" id="CHEBI:43474"/>
        <dbReference type="ChEBI" id="CHEBI:58394"/>
        <dbReference type="EC" id="4.2.3.4"/>
    </reaction>
</comment>
<comment type="cofactor">
    <cofactor evidence="1">
        <name>Co(2+)</name>
        <dbReference type="ChEBI" id="CHEBI:48828"/>
    </cofactor>
    <cofactor evidence="1">
        <name>Zn(2+)</name>
        <dbReference type="ChEBI" id="CHEBI:29105"/>
    </cofactor>
    <text evidence="1">Binds 1 divalent metal cation per subunit. Can use either Co(2+) or Zn(2+).</text>
</comment>
<comment type="cofactor">
    <cofactor evidence="1">
        <name>NAD(+)</name>
        <dbReference type="ChEBI" id="CHEBI:57540"/>
    </cofactor>
</comment>
<comment type="pathway">
    <text evidence="1">Metabolic intermediate biosynthesis; chorismate biosynthesis; chorismate from D-erythrose 4-phosphate and phosphoenolpyruvate: step 2/7.</text>
</comment>
<comment type="subcellular location">
    <subcellularLocation>
        <location evidence="1">Cytoplasm</location>
    </subcellularLocation>
</comment>
<comment type="similarity">
    <text evidence="1">Belongs to the sugar phosphate cyclases superfamily. Dehydroquinate synthase family.</text>
</comment>
<name>AROB_THISH</name>
<organism>
    <name type="scientific">Thioalkalivibrio sulfidiphilus (strain HL-EbGR7)</name>
    <dbReference type="NCBI Taxonomy" id="396588"/>
    <lineage>
        <taxon>Bacteria</taxon>
        <taxon>Pseudomonadati</taxon>
        <taxon>Pseudomonadota</taxon>
        <taxon>Gammaproteobacteria</taxon>
        <taxon>Chromatiales</taxon>
        <taxon>Ectothiorhodospiraceae</taxon>
        <taxon>Thioalkalivibrio</taxon>
    </lineage>
</organism>
<feature type="chain" id="PRO_1000119098" description="3-dehydroquinate synthase">
    <location>
        <begin position="1"/>
        <end position="361"/>
    </location>
</feature>
<feature type="binding site" evidence="1">
    <location>
        <begin position="69"/>
        <end position="74"/>
    </location>
    <ligand>
        <name>NAD(+)</name>
        <dbReference type="ChEBI" id="CHEBI:57540"/>
    </ligand>
</feature>
<feature type="binding site" evidence="1">
    <location>
        <begin position="103"/>
        <end position="107"/>
    </location>
    <ligand>
        <name>NAD(+)</name>
        <dbReference type="ChEBI" id="CHEBI:57540"/>
    </ligand>
</feature>
<feature type="binding site" evidence="1">
    <location>
        <begin position="127"/>
        <end position="128"/>
    </location>
    <ligand>
        <name>NAD(+)</name>
        <dbReference type="ChEBI" id="CHEBI:57540"/>
    </ligand>
</feature>
<feature type="binding site" evidence="1">
    <location>
        <position position="140"/>
    </location>
    <ligand>
        <name>NAD(+)</name>
        <dbReference type="ChEBI" id="CHEBI:57540"/>
    </ligand>
</feature>
<feature type="binding site" evidence="1">
    <location>
        <position position="149"/>
    </location>
    <ligand>
        <name>NAD(+)</name>
        <dbReference type="ChEBI" id="CHEBI:57540"/>
    </ligand>
</feature>
<feature type="binding site" evidence="1">
    <location>
        <begin position="167"/>
        <end position="170"/>
    </location>
    <ligand>
        <name>NAD(+)</name>
        <dbReference type="ChEBI" id="CHEBI:57540"/>
    </ligand>
</feature>
<feature type="binding site" evidence="1">
    <location>
        <position position="182"/>
    </location>
    <ligand>
        <name>Zn(2+)</name>
        <dbReference type="ChEBI" id="CHEBI:29105"/>
    </ligand>
</feature>
<feature type="binding site" evidence="1">
    <location>
        <position position="245"/>
    </location>
    <ligand>
        <name>Zn(2+)</name>
        <dbReference type="ChEBI" id="CHEBI:29105"/>
    </ligand>
</feature>
<feature type="binding site" evidence="1">
    <location>
        <position position="262"/>
    </location>
    <ligand>
        <name>Zn(2+)</name>
        <dbReference type="ChEBI" id="CHEBI:29105"/>
    </ligand>
</feature>
<dbReference type="EC" id="4.2.3.4" evidence="1"/>
<dbReference type="EMBL" id="CP001339">
    <property type="protein sequence ID" value="ACL74100.1"/>
    <property type="molecule type" value="Genomic_DNA"/>
</dbReference>
<dbReference type="RefSeq" id="WP_012639562.1">
    <property type="nucleotide sequence ID" value="NC_011901.1"/>
</dbReference>
<dbReference type="SMR" id="B8GPV3"/>
<dbReference type="STRING" id="396588.Tgr7_3030"/>
<dbReference type="KEGG" id="tgr:Tgr7_3030"/>
<dbReference type="eggNOG" id="COG0337">
    <property type="taxonomic scope" value="Bacteria"/>
</dbReference>
<dbReference type="HOGENOM" id="CLU_001201_0_2_6"/>
<dbReference type="OrthoDB" id="9806583at2"/>
<dbReference type="UniPathway" id="UPA00053">
    <property type="reaction ID" value="UER00085"/>
</dbReference>
<dbReference type="Proteomes" id="UP000002383">
    <property type="component" value="Chromosome"/>
</dbReference>
<dbReference type="GO" id="GO:0005737">
    <property type="term" value="C:cytoplasm"/>
    <property type="evidence" value="ECO:0007669"/>
    <property type="project" value="UniProtKB-SubCell"/>
</dbReference>
<dbReference type="GO" id="GO:0003856">
    <property type="term" value="F:3-dehydroquinate synthase activity"/>
    <property type="evidence" value="ECO:0007669"/>
    <property type="project" value="UniProtKB-UniRule"/>
</dbReference>
<dbReference type="GO" id="GO:0046872">
    <property type="term" value="F:metal ion binding"/>
    <property type="evidence" value="ECO:0007669"/>
    <property type="project" value="UniProtKB-KW"/>
</dbReference>
<dbReference type="GO" id="GO:0000166">
    <property type="term" value="F:nucleotide binding"/>
    <property type="evidence" value="ECO:0007669"/>
    <property type="project" value="UniProtKB-KW"/>
</dbReference>
<dbReference type="GO" id="GO:0008652">
    <property type="term" value="P:amino acid biosynthetic process"/>
    <property type="evidence" value="ECO:0007669"/>
    <property type="project" value="UniProtKB-KW"/>
</dbReference>
<dbReference type="GO" id="GO:0009073">
    <property type="term" value="P:aromatic amino acid family biosynthetic process"/>
    <property type="evidence" value="ECO:0007669"/>
    <property type="project" value="UniProtKB-KW"/>
</dbReference>
<dbReference type="GO" id="GO:0009423">
    <property type="term" value="P:chorismate biosynthetic process"/>
    <property type="evidence" value="ECO:0007669"/>
    <property type="project" value="UniProtKB-UniRule"/>
</dbReference>
<dbReference type="CDD" id="cd08195">
    <property type="entry name" value="DHQS"/>
    <property type="match status" value="1"/>
</dbReference>
<dbReference type="FunFam" id="1.20.1090.10:FF:000002">
    <property type="entry name" value="3-dehydroquinate synthase"/>
    <property type="match status" value="1"/>
</dbReference>
<dbReference type="FunFam" id="3.40.50.1970:FF:000001">
    <property type="entry name" value="3-dehydroquinate synthase"/>
    <property type="match status" value="1"/>
</dbReference>
<dbReference type="Gene3D" id="3.40.50.1970">
    <property type="match status" value="1"/>
</dbReference>
<dbReference type="Gene3D" id="1.20.1090.10">
    <property type="entry name" value="Dehydroquinate synthase-like - alpha domain"/>
    <property type="match status" value="1"/>
</dbReference>
<dbReference type="HAMAP" id="MF_00110">
    <property type="entry name" value="DHQ_synthase"/>
    <property type="match status" value="1"/>
</dbReference>
<dbReference type="InterPro" id="IPR050071">
    <property type="entry name" value="Dehydroquinate_synthase"/>
</dbReference>
<dbReference type="InterPro" id="IPR016037">
    <property type="entry name" value="DHQ_synth_AroB"/>
</dbReference>
<dbReference type="InterPro" id="IPR030963">
    <property type="entry name" value="DHQ_synth_fam"/>
</dbReference>
<dbReference type="InterPro" id="IPR030960">
    <property type="entry name" value="DHQS/DOIS_N"/>
</dbReference>
<dbReference type="InterPro" id="IPR056179">
    <property type="entry name" value="DHQS_C"/>
</dbReference>
<dbReference type="NCBIfam" id="TIGR01357">
    <property type="entry name" value="aroB"/>
    <property type="match status" value="1"/>
</dbReference>
<dbReference type="PANTHER" id="PTHR43622">
    <property type="entry name" value="3-DEHYDROQUINATE SYNTHASE"/>
    <property type="match status" value="1"/>
</dbReference>
<dbReference type="PANTHER" id="PTHR43622:SF7">
    <property type="entry name" value="3-DEHYDROQUINATE SYNTHASE, CHLOROPLASTIC"/>
    <property type="match status" value="1"/>
</dbReference>
<dbReference type="Pfam" id="PF01761">
    <property type="entry name" value="DHQ_synthase"/>
    <property type="match status" value="1"/>
</dbReference>
<dbReference type="Pfam" id="PF24621">
    <property type="entry name" value="DHQS_C"/>
    <property type="match status" value="1"/>
</dbReference>
<dbReference type="PIRSF" id="PIRSF001455">
    <property type="entry name" value="DHQ_synth"/>
    <property type="match status" value="1"/>
</dbReference>
<dbReference type="SUPFAM" id="SSF56796">
    <property type="entry name" value="Dehydroquinate synthase-like"/>
    <property type="match status" value="1"/>
</dbReference>
<keyword id="KW-0028">Amino-acid biosynthesis</keyword>
<keyword id="KW-0057">Aromatic amino acid biosynthesis</keyword>
<keyword id="KW-0170">Cobalt</keyword>
<keyword id="KW-0963">Cytoplasm</keyword>
<keyword id="KW-0456">Lyase</keyword>
<keyword id="KW-0479">Metal-binding</keyword>
<keyword id="KW-0520">NAD</keyword>
<keyword id="KW-0547">Nucleotide-binding</keyword>
<keyword id="KW-1185">Reference proteome</keyword>
<keyword id="KW-0862">Zinc</keyword>